<feature type="chain" id="PRO_0000357940" description="NADH-quinone oxidoreductase subunit D 2">
    <location>
        <begin position="1"/>
        <end position="440"/>
    </location>
</feature>
<protein>
    <recommendedName>
        <fullName evidence="1">NADH-quinone oxidoreductase subunit D 2</fullName>
        <ecNumber evidence="1">7.1.1.-</ecNumber>
    </recommendedName>
    <alternativeName>
        <fullName evidence="1">NADH dehydrogenase I subunit D 2</fullName>
    </alternativeName>
    <alternativeName>
        <fullName evidence="1">NDH-1 subunit D 2</fullName>
    </alternativeName>
</protein>
<keyword id="KW-1003">Cell membrane</keyword>
<keyword id="KW-0472">Membrane</keyword>
<keyword id="KW-0520">NAD</keyword>
<keyword id="KW-0874">Quinone</keyword>
<keyword id="KW-1185">Reference proteome</keyword>
<keyword id="KW-1278">Translocase</keyword>
<keyword id="KW-0813">Transport</keyword>
<gene>
    <name evidence="1" type="primary">nuoD2</name>
    <name type="ordered locus">SCO4565</name>
    <name type="ORF">SCD16A.18c</name>
</gene>
<proteinExistence type="inferred from homology"/>
<sequence>MSTSHASPRETTEGTVYTVTGGDWDEVVQSAARADDERIVVNMGPQHPSTHGVLRLILEIDGETVTEARCGIGYLHTGIEKNLEYRTWTQGTTFVTRMDYLTPFFNEAAYCLGVEKLLGIDDQIPDRATIIRVLLMELNRLSSHLVAIATGGMELGATTIMIYGFRDRELILDIYELITGLRMNHAYIRPGGLAQDLPPGAVDQIREFVKKMNKNLPEYDKLATGNPIFKARMQDVGYLDLAGCMALGATGPVLRSTGLPHDLRKTQPYCGYETYDFDVPTADTCDSYGRFLIRLEEMRQSLRIVEQCLDRLQPGPVMVADKKIAWPAQLALGPDGLGNSLDHIKKIMGTSMEALIHHFKLVTEGFRVPPAQVYTAVESPKGELGVHVVSDGGTRPFRVHFRDPSFTNLQAMAAMCEGGQVADVIVAVASIDPVMGGVDR</sequence>
<dbReference type="EC" id="7.1.1.-" evidence="1"/>
<dbReference type="EMBL" id="AL939120">
    <property type="protein sequence ID" value="CAB44528.1"/>
    <property type="molecule type" value="Genomic_DNA"/>
</dbReference>
<dbReference type="PIR" id="T34621">
    <property type="entry name" value="T34621"/>
</dbReference>
<dbReference type="RefSeq" id="NP_628727.1">
    <property type="nucleotide sequence ID" value="NC_003888.3"/>
</dbReference>
<dbReference type="RefSeq" id="WP_011029734.1">
    <property type="nucleotide sequence ID" value="NZ_VNID01000017.1"/>
</dbReference>
<dbReference type="SMR" id="Q9XAQ7"/>
<dbReference type="FunCoup" id="Q9XAQ7">
    <property type="interactions" value="282"/>
</dbReference>
<dbReference type="STRING" id="100226.gene:17762210"/>
<dbReference type="PaxDb" id="100226-SCO4565"/>
<dbReference type="KEGG" id="sco:SCO4565"/>
<dbReference type="PATRIC" id="fig|100226.15.peg.4637"/>
<dbReference type="eggNOG" id="COG0649">
    <property type="taxonomic scope" value="Bacteria"/>
</dbReference>
<dbReference type="HOGENOM" id="CLU_015134_1_2_11"/>
<dbReference type="InParanoid" id="Q9XAQ7"/>
<dbReference type="OrthoDB" id="9801496at2"/>
<dbReference type="PhylomeDB" id="Q9XAQ7"/>
<dbReference type="Proteomes" id="UP000001973">
    <property type="component" value="Chromosome"/>
</dbReference>
<dbReference type="GO" id="GO:0005886">
    <property type="term" value="C:plasma membrane"/>
    <property type="evidence" value="ECO:0007669"/>
    <property type="project" value="UniProtKB-SubCell"/>
</dbReference>
<dbReference type="GO" id="GO:0051287">
    <property type="term" value="F:NAD binding"/>
    <property type="evidence" value="ECO:0007669"/>
    <property type="project" value="InterPro"/>
</dbReference>
<dbReference type="GO" id="GO:0050136">
    <property type="term" value="F:NADH:ubiquinone reductase (non-electrogenic) activity"/>
    <property type="evidence" value="ECO:0007669"/>
    <property type="project" value="UniProtKB-UniRule"/>
</dbReference>
<dbReference type="GO" id="GO:0048038">
    <property type="term" value="F:quinone binding"/>
    <property type="evidence" value="ECO:0007669"/>
    <property type="project" value="UniProtKB-KW"/>
</dbReference>
<dbReference type="Gene3D" id="1.10.645.10">
    <property type="entry name" value="Cytochrome-c3 Hydrogenase, chain B"/>
    <property type="match status" value="1"/>
</dbReference>
<dbReference type="HAMAP" id="MF_01358">
    <property type="entry name" value="NDH1_NuoD"/>
    <property type="match status" value="1"/>
</dbReference>
<dbReference type="InterPro" id="IPR001135">
    <property type="entry name" value="NADH_Q_OxRdtase_suD"/>
</dbReference>
<dbReference type="InterPro" id="IPR014029">
    <property type="entry name" value="NADH_UbQ_OxRdtase_49kDa_CS"/>
</dbReference>
<dbReference type="InterPro" id="IPR022885">
    <property type="entry name" value="NDH1_su_D/H"/>
</dbReference>
<dbReference type="InterPro" id="IPR029014">
    <property type="entry name" value="NiFe-Hase_large"/>
</dbReference>
<dbReference type="NCBIfam" id="TIGR01962">
    <property type="entry name" value="NuoD"/>
    <property type="match status" value="1"/>
</dbReference>
<dbReference type="NCBIfam" id="NF004739">
    <property type="entry name" value="PRK06075.1"/>
    <property type="match status" value="1"/>
</dbReference>
<dbReference type="PANTHER" id="PTHR11993:SF10">
    <property type="entry name" value="NADH DEHYDROGENASE [UBIQUINONE] IRON-SULFUR PROTEIN 2, MITOCHONDRIAL"/>
    <property type="match status" value="1"/>
</dbReference>
<dbReference type="PANTHER" id="PTHR11993">
    <property type="entry name" value="NADH-UBIQUINONE OXIDOREDUCTASE 49 KDA SUBUNIT"/>
    <property type="match status" value="1"/>
</dbReference>
<dbReference type="Pfam" id="PF00346">
    <property type="entry name" value="Complex1_49kDa"/>
    <property type="match status" value="1"/>
</dbReference>
<dbReference type="SUPFAM" id="SSF56762">
    <property type="entry name" value="HydB/Nqo4-like"/>
    <property type="match status" value="1"/>
</dbReference>
<dbReference type="PROSITE" id="PS00535">
    <property type="entry name" value="COMPLEX1_49K"/>
    <property type="match status" value="1"/>
</dbReference>
<reference key="1">
    <citation type="journal article" date="2002" name="Nature">
        <title>Complete genome sequence of the model actinomycete Streptomyces coelicolor A3(2).</title>
        <authorList>
            <person name="Bentley S.D."/>
            <person name="Chater K.F."/>
            <person name="Cerdeno-Tarraga A.-M."/>
            <person name="Challis G.L."/>
            <person name="Thomson N.R."/>
            <person name="James K.D."/>
            <person name="Harris D.E."/>
            <person name="Quail M.A."/>
            <person name="Kieser H."/>
            <person name="Harper D."/>
            <person name="Bateman A."/>
            <person name="Brown S."/>
            <person name="Chandra G."/>
            <person name="Chen C.W."/>
            <person name="Collins M."/>
            <person name="Cronin A."/>
            <person name="Fraser A."/>
            <person name="Goble A."/>
            <person name="Hidalgo J."/>
            <person name="Hornsby T."/>
            <person name="Howarth S."/>
            <person name="Huang C.-H."/>
            <person name="Kieser T."/>
            <person name="Larke L."/>
            <person name="Murphy L.D."/>
            <person name="Oliver K."/>
            <person name="O'Neil S."/>
            <person name="Rabbinowitsch E."/>
            <person name="Rajandream M.A."/>
            <person name="Rutherford K.M."/>
            <person name="Rutter S."/>
            <person name="Seeger K."/>
            <person name="Saunders D."/>
            <person name="Sharp S."/>
            <person name="Squares R."/>
            <person name="Squares S."/>
            <person name="Taylor K."/>
            <person name="Warren T."/>
            <person name="Wietzorrek A."/>
            <person name="Woodward J.R."/>
            <person name="Barrell B.G."/>
            <person name="Parkhill J."/>
            <person name="Hopwood D.A."/>
        </authorList>
    </citation>
    <scope>NUCLEOTIDE SEQUENCE [LARGE SCALE GENOMIC DNA]</scope>
    <source>
        <strain>ATCC BAA-471 / A3(2) / M145</strain>
    </source>
</reference>
<organism>
    <name type="scientific">Streptomyces coelicolor (strain ATCC BAA-471 / A3(2) / M145)</name>
    <dbReference type="NCBI Taxonomy" id="100226"/>
    <lineage>
        <taxon>Bacteria</taxon>
        <taxon>Bacillati</taxon>
        <taxon>Actinomycetota</taxon>
        <taxon>Actinomycetes</taxon>
        <taxon>Kitasatosporales</taxon>
        <taxon>Streptomycetaceae</taxon>
        <taxon>Streptomyces</taxon>
        <taxon>Streptomyces albidoflavus group</taxon>
    </lineage>
</organism>
<name>NUOD2_STRCO</name>
<evidence type="ECO:0000255" key="1">
    <source>
        <dbReference type="HAMAP-Rule" id="MF_01358"/>
    </source>
</evidence>
<comment type="function">
    <text evidence="1">NDH-1 shuttles electrons from NADH, via FMN and iron-sulfur (Fe-S) centers, to quinones in the respiratory chain. The immediate electron acceptor for the enzyme in this species is believed to be a menaquinone. Couples the redox reaction to proton translocation (for every two electrons transferred, four hydrogen ions are translocated across the cytoplasmic membrane), and thus conserves the redox energy in a proton gradient.</text>
</comment>
<comment type="catalytic activity">
    <reaction evidence="1">
        <text>a quinone + NADH + 5 H(+)(in) = a quinol + NAD(+) + 4 H(+)(out)</text>
        <dbReference type="Rhea" id="RHEA:57888"/>
        <dbReference type="ChEBI" id="CHEBI:15378"/>
        <dbReference type="ChEBI" id="CHEBI:24646"/>
        <dbReference type="ChEBI" id="CHEBI:57540"/>
        <dbReference type="ChEBI" id="CHEBI:57945"/>
        <dbReference type="ChEBI" id="CHEBI:132124"/>
    </reaction>
</comment>
<comment type="subunit">
    <text evidence="1">NDH-1 is composed of 14 different subunits. Subunits NuoB, C, D, E, F, and G constitute the peripheral sector of the complex.</text>
</comment>
<comment type="subcellular location">
    <subcellularLocation>
        <location evidence="1">Cell membrane</location>
        <topology evidence="1">Peripheral membrane protein</topology>
        <orientation evidence="1">Cytoplasmic side</orientation>
    </subcellularLocation>
</comment>
<comment type="similarity">
    <text evidence="1">Belongs to the complex I 49 kDa subunit family.</text>
</comment>
<accession>Q9XAQ7</accession>